<gene>
    <name evidence="1" type="primary">menD</name>
    <name type="ordered locus">SPA0554</name>
</gene>
<reference key="1">
    <citation type="journal article" date="2004" name="Nat. Genet.">
        <title>Comparison of genome degradation in Paratyphi A and Typhi, human-restricted serovars of Salmonella enterica that cause typhoid.</title>
        <authorList>
            <person name="McClelland M."/>
            <person name="Sanderson K.E."/>
            <person name="Clifton S.W."/>
            <person name="Latreille P."/>
            <person name="Porwollik S."/>
            <person name="Sabo A."/>
            <person name="Meyer R."/>
            <person name="Bieri T."/>
            <person name="Ozersky P."/>
            <person name="McLellan M."/>
            <person name="Harkins C.R."/>
            <person name="Wang C."/>
            <person name="Nguyen C."/>
            <person name="Berghoff A."/>
            <person name="Elliott G."/>
            <person name="Kohlberg S."/>
            <person name="Strong C."/>
            <person name="Du F."/>
            <person name="Carter J."/>
            <person name="Kremizki C."/>
            <person name="Layman D."/>
            <person name="Leonard S."/>
            <person name="Sun H."/>
            <person name="Fulton L."/>
            <person name="Nash W."/>
            <person name="Miner T."/>
            <person name="Minx P."/>
            <person name="Delehaunty K."/>
            <person name="Fronick C."/>
            <person name="Magrini V."/>
            <person name="Nhan M."/>
            <person name="Warren W."/>
            <person name="Florea L."/>
            <person name="Spieth J."/>
            <person name="Wilson R.K."/>
        </authorList>
    </citation>
    <scope>NUCLEOTIDE SEQUENCE [LARGE SCALE GENOMIC DNA]</scope>
    <source>
        <strain>ATCC 9150 / SARB42</strain>
    </source>
</reference>
<dbReference type="EC" id="2.2.1.9" evidence="1"/>
<dbReference type="EMBL" id="CP000026">
    <property type="protein sequence ID" value="AAV76556.1"/>
    <property type="molecule type" value="Genomic_DNA"/>
</dbReference>
<dbReference type="RefSeq" id="WP_000116383.1">
    <property type="nucleotide sequence ID" value="NC_006511.1"/>
</dbReference>
<dbReference type="SMR" id="Q5PN76"/>
<dbReference type="KEGG" id="spt:SPA0554"/>
<dbReference type="HOGENOM" id="CLU_006051_3_0_6"/>
<dbReference type="UniPathway" id="UPA00079"/>
<dbReference type="UniPathway" id="UPA01057">
    <property type="reaction ID" value="UER00164"/>
</dbReference>
<dbReference type="Proteomes" id="UP000008185">
    <property type="component" value="Chromosome"/>
</dbReference>
<dbReference type="GO" id="GO:0070204">
    <property type="term" value="F:2-succinyl-5-enolpyruvyl-6-hydroxy-3-cyclohexene-1-carboxylic-acid synthase activity"/>
    <property type="evidence" value="ECO:0007669"/>
    <property type="project" value="UniProtKB-UniRule"/>
</dbReference>
<dbReference type="GO" id="GO:0000287">
    <property type="term" value="F:magnesium ion binding"/>
    <property type="evidence" value="ECO:0007669"/>
    <property type="project" value="UniProtKB-UniRule"/>
</dbReference>
<dbReference type="GO" id="GO:0030145">
    <property type="term" value="F:manganese ion binding"/>
    <property type="evidence" value="ECO:0007669"/>
    <property type="project" value="UniProtKB-UniRule"/>
</dbReference>
<dbReference type="GO" id="GO:0030976">
    <property type="term" value="F:thiamine pyrophosphate binding"/>
    <property type="evidence" value="ECO:0007669"/>
    <property type="project" value="UniProtKB-UniRule"/>
</dbReference>
<dbReference type="GO" id="GO:0009234">
    <property type="term" value="P:menaquinone biosynthetic process"/>
    <property type="evidence" value="ECO:0007669"/>
    <property type="project" value="UniProtKB-UniRule"/>
</dbReference>
<dbReference type="CDD" id="cd07037">
    <property type="entry name" value="TPP_PYR_MenD"/>
    <property type="match status" value="1"/>
</dbReference>
<dbReference type="CDD" id="cd02009">
    <property type="entry name" value="TPP_SHCHC_synthase"/>
    <property type="match status" value="1"/>
</dbReference>
<dbReference type="FunFam" id="3.40.50.1220:FF:000010">
    <property type="entry name" value="2-succinyl-5-enolpyruvyl-6-hydroxy-3-cyclohexene-1-carboxylate synthase"/>
    <property type="match status" value="1"/>
</dbReference>
<dbReference type="FunFam" id="3.40.50.970:FF:000029">
    <property type="entry name" value="2-succinyl-5-enolpyruvyl-6-hydroxy-3-cyclohexene-1-carboxylate synthase"/>
    <property type="match status" value="1"/>
</dbReference>
<dbReference type="Gene3D" id="3.40.50.970">
    <property type="match status" value="2"/>
</dbReference>
<dbReference type="Gene3D" id="3.40.50.1220">
    <property type="entry name" value="TPP-binding domain"/>
    <property type="match status" value="1"/>
</dbReference>
<dbReference type="HAMAP" id="MF_01659">
    <property type="entry name" value="MenD"/>
    <property type="match status" value="1"/>
</dbReference>
<dbReference type="InterPro" id="IPR004433">
    <property type="entry name" value="MenaQ_synth_MenD"/>
</dbReference>
<dbReference type="InterPro" id="IPR032264">
    <property type="entry name" value="MenD_middle"/>
</dbReference>
<dbReference type="InterPro" id="IPR029061">
    <property type="entry name" value="THDP-binding"/>
</dbReference>
<dbReference type="InterPro" id="IPR012001">
    <property type="entry name" value="Thiamin_PyroP_enz_TPP-bd_dom"/>
</dbReference>
<dbReference type="InterPro" id="IPR011766">
    <property type="entry name" value="TPP_enzyme_TPP-bd"/>
</dbReference>
<dbReference type="NCBIfam" id="TIGR00173">
    <property type="entry name" value="menD"/>
    <property type="match status" value="1"/>
</dbReference>
<dbReference type="PANTHER" id="PTHR42916">
    <property type="entry name" value="2-SUCCINYL-5-ENOLPYRUVYL-6-HYDROXY-3-CYCLOHEXENE-1-CARBOXYLATE SYNTHASE"/>
    <property type="match status" value="1"/>
</dbReference>
<dbReference type="PANTHER" id="PTHR42916:SF1">
    <property type="entry name" value="PROTEIN PHYLLO, CHLOROPLASTIC"/>
    <property type="match status" value="1"/>
</dbReference>
<dbReference type="Pfam" id="PF02775">
    <property type="entry name" value="TPP_enzyme_C"/>
    <property type="match status" value="1"/>
</dbReference>
<dbReference type="Pfam" id="PF16582">
    <property type="entry name" value="TPP_enzyme_M_2"/>
    <property type="match status" value="1"/>
</dbReference>
<dbReference type="Pfam" id="PF02776">
    <property type="entry name" value="TPP_enzyme_N"/>
    <property type="match status" value="1"/>
</dbReference>
<dbReference type="PIRSF" id="PIRSF004983">
    <property type="entry name" value="MenD"/>
    <property type="match status" value="1"/>
</dbReference>
<dbReference type="SUPFAM" id="SSF52518">
    <property type="entry name" value="Thiamin diphosphate-binding fold (THDP-binding)"/>
    <property type="match status" value="2"/>
</dbReference>
<comment type="function">
    <text evidence="1">Catalyzes the thiamine diphosphate-dependent decarboxylation of 2-oxoglutarate and the subsequent addition of the resulting succinic semialdehyde-thiamine pyrophosphate anion to isochorismate to yield 2-succinyl-5-enolpyruvyl-6-hydroxy-3-cyclohexene-1-carboxylate (SEPHCHC).</text>
</comment>
<comment type="catalytic activity">
    <reaction evidence="1">
        <text>isochorismate + 2-oxoglutarate + H(+) = 5-enolpyruvoyl-6-hydroxy-2-succinyl-cyclohex-3-ene-1-carboxylate + CO2</text>
        <dbReference type="Rhea" id="RHEA:25593"/>
        <dbReference type="ChEBI" id="CHEBI:15378"/>
        <dbReference type="ChEBI" id="CHEBI:16526"/>
        <dbReference type="ChEBI" id="CHEBI:16810"/>
        <dbReference type="ChEBI" id="CHEBI:29780"/>
        <dbReference type="ChEBI" id="CHEBI:58818"/>
        <dbReference type="EC" id="2.2.1.9"/>
    </reaction>
</comment>
<comment type="cofactor">
    <cofactor evidence="1">
        <name>Mg(2+)</name>
        <dbReference type="ChEBI" id="CHEBI:18420"/>
    </cofactor>
    <cofactor evidence="1">
        <name>Mn(2+)</name>
        <dbReference type="ChEBI" id="CHEBI:29035"/>
    </cofactor>
</comment>
<comment type="cofactor">
    <cofactor evidence="1">
        <name>thiamine diphosphate</name>
        <dbReference type="ChEBI" id="CHEBI:58937"/>
    </cofactor>
    <text evidence="1">Binds 1 thiamine pyrophosphate per subunit.</text>
</comment>
<comment type="pathway">
    <text evidence="1">Quinol/quinone metabolism; 1,4-dihydroxy-2-naphthoate biosynthesis; 1,4-dihydroxy-2-naphthoate from chorismate: step 2/7.</text>
</comment>
<comment type="pathway">
    <text evidence="1">Quinol/quinone metabolism; menaquinone biosynthesis.</text>
</comment>
<comment type="subunit">
    <text evidence="1">Homodimer.</text>
</comment>
<comment type="similarity">
    <text evidence="1">Belongs to the TPP enzyme family. MenD subfamily.</text>
</comment>
<accession>Q5PN76</accession>
<name>MEND_SALPA</name>
<organism>
    <name type="scientific">Salmonella paratyphi A (strain ATCC 9150 / SARB42)</name>
    <dbReference type="NCBI Taxonomy" id="295319"/>
    <lineage>
        <taxon>Bacteria</taxon>
        <taxon>Pseudomonadati</taxon>
        <taxon>Pseudomonadota</taxon>
        <taxon>Gammaproteobacteria</taxon>
        <taxon>Enterobacterales</taxon>
        <taxon>Enterobacteriaceae</taxon>
        <taxon>Salmonella</taxon>
    </lineage>
</organism>
<protein>
    <recommendedName>
        <fullName evidence="1">2-succinyl-5-enolpyruvyl-6-hydroxy-3-cyclohexene-1-carboxylate synthase</fullName>
        <shortName evidence="1">SEPHCHC synthase</shortName>
        <ecNumber evidence="1">2.2.1.9</ecNumber>
    </recommendedName>
    <alternativeName>
        <fullName evidence="1">Menaquinone biosynthesis protein MenD</fullName>
    </alternativeName>
</protein>
<sequence>MSVSAFNRRWAAVILEALTRHGVRHVCIAPGSRSTPLTLAAAENPAFIHHTHFDERGLGHLALGLAKVSQQPVAVIVTSGTAVANLYPALIEAGLTGEKLILLTADRPPELIDCGANQAIRQAGMFASHPSQTLSLPRPTQDIPARWLVSTIDNALAMLHAGALHINCPFAEPLYGDMNDTGLVWQQRLGDWWQDEKPWLREARRLASDKQRDWFFWRQKRGVVVAGRMSAEEGKKVAQWAQTLGWPLIGDVLSQTGQPLPCADLWLGNAKAVTELQQAQIVVQLGSSLTGKRLLQWQATCEPEEYWVIDNIEGRLDPAHHRGRRLVAKIADWLELHPAEKRKPWCVGIPRLAELAWQRVVAQRDTFGEAQLAHRIRDYLPEQGQLFVGNSLVVRLIDALSQLPAGYPVYSNRGASGIDGLLSTAAGVQRASAKSTLAIVGDLSALYDLNALALLRQVSAPFVLIVVNNNGGQIFSLLPTPQSKRERFYLMPQNVHFDHAAAMFNLRYHRPENWEELESALAGAWRTPATTVIELVVNDTDGAQTLQQLLAQVSHL</sequence>
<keyword id="KW-0460">Magnesium</keyword>
<keyword id="KW-0464">Manganese</keyword>
<keyword id="KW-0474">Menaquinone biosynthesis</keyword>
<keyword id="KW-0479">Metal-binding</keyword>
<keyword id="KW-0786">Thiamine pyrophosphate</keyword>
<keyword id="KW-0808">Transferase</keyword>
<evidence type="ECO:0000255" key="1">
    <source>
        <dbReference type="HAMAP-Rule" id="MF_01659"/>
    </source>
</evidence>
<feature type="chain" id="PRO_0000341822" description="2-succinyl-5-enolpyruvyl-6-hydroxy-3-cyclohexene-1-carboxylate synthase">
    <location>
        <begin position="1"/>
        <end position="556"/>
    </location>
</feature>
<proteinExistence type="inferred from homology"/>